<organismHost>
    <name type="scientific">Ornithodoros</name>
    <name type="common">relapsing fever ticks</name>
    <dbReference type="NCBI Taxonomy" id="6937"/>
</organismHost>
<organismHost>
    <name type="scientific">Phacochoerus aethiopicus</name>
    <name type="common">Warthog</name>
    <dbReference type="NCBI Taxonomy" id="85517"/>
</organismHost>
<organismHost>
    <name type="scientific">Phacochoerus africanus</name>
    <name type="common">Warthog</name>
    <dbReference type="NCBI Taxonomy" id="41426"/>
</organismHost>
<organismHost>
    <name type="scientific">Potamochoerus larvatus</name>
    <name type="common">Bushpig</name>
    <dbReference type="NCBI Taxonomy" id="273792"/>
</organismHost>
<organismHost>
    <name type="scientific">Sus scrofa</name>
    <name type="common">Pig</name>
    <dbReference type="NCBI Taxonomy" id="9823"/>
</organismHost>
<feature type="chain" id="PRO_0000373379" description="Putative primase C962R">
    <location>
        <begin position="1"/>
        <end position="962"/>
    </location>
</feature>
<feature type="domain" description="SF3 helicase" evidence="1">
    <location>
        <begin position="607"/>
        <end position="775"/>
    </location>
</feature>
<feature type="binding site" evidence="1">
    <location>
        <begin position="636"/>
        <end position="643"/>
    </location>
    <ligand>
        <name>ATP</name>
        <dbReference type="ChEBI" id="CHEBI:30616"/>
    </ligand>
</feature>
<evidence type="ECO:0000255" key="1">
    <source>
        <dbReference type="PROSITE-ProRule" id="PRU00551"/>
    </source>
</evidence>
<evidence type="ECO:0000305" key="2"/>
<protein>
    <recommendedName>
        <fullName evidence="2">Putative primase C962R</fullName>
        <ecNumber>3.6.4.-</ecNumber>
    </recommendedName>
</protein>
<comment type="induction">
    <text evidence="2">Expressed in the late phase of the viral replicative cycle.</text>
</comment>
<comment type="similarity">
    <text evidence="2">Belongs to the asfivirus helicase C962R family.</text>
</comment>
<sequence>MREESWEEHDTIQLTAQRKYLAEVQALETLLTRELSVFLTEPGSKKTNIINRITGKTYALPSTELLRLYEHLEQCRKQGALMYFLERQGTYSGLMLDYDLKLNTNAAPPLESPALSRLCHRIFMHIKNTSVLPEGSHKIHFFFTLKPEVVQGKYGFHVLIPGLKLAASTKKSIIASLQHDATVQKILHEQGVTNPESCLDPHSASVPSLLYGSSKLNHKPYQLKTGFELVFDSSDPDYIPIHQIKNIEAYNLVSELSLTNEQGSLVKPVYCEADIAAEKEEEIPVDDHSLSILMLHDPEARYLHKILNLLPPEYYVEYPLWSNVVFALANTSANYRPLAEWFSQKCPEKWNTGGKEKLEKLWNDASRHTEKKITKRSIMYWAHKHAPQQYKEIVEQGYFSILAEYVYSYNGTLEHYMIAKVIYAMMGNKFVVDVDSNGKYVWFEFVLPGQPMNQGEIWKWRKEVNPDELHIYISENFSRVMDRITEHIKYHLSQPHETNILNYYKKLLKAFERSKSKIFNDSFKKGVIRQAEFLFRQRSFIQTLDTNPHLLGVGNGVLSIETIPAKLINHFHEHPIHQYTHICYEPFNPENPWTKLLLNALQDIIPELDARLWIMFYLSTAIFRGLKEALMLLWLGGGCNGKTFLMRLVAMVLGDHYASKLNISLLTSCRETAEKPNSAFMRLKGRGYGYFEETNKSEVLNTSRLKEMVNPGDVTARELNQKQESFQMTATMVAASNYNFIIDTTDHGTWRRLRHYRSKVKFCHNPDPNNSYEKKEDPRFIHEYIMDPNCQNAFFSILVYFWEKLQKEYNGQIKKVFCPTIESETEAYRKSQDTLHRFITERVVESPSAETVYNLSEVVTAYAEWYNTNINVKRHIALELSQELENSVLEKYLQWSPNKTRILKGCRILHKFETLQPGESYIGVSTAGTLLNTPICEPKNKWWEWSPNPSAPPEKEASAPTP</sequence>
<dbReference type="EC" id="3.6.4.-"/>
<dbReference type="EMBL" id="L00966">
    <property type="protein sequence ID" value="AAL31318.1"/>
    <property type="molecule type" value="Genomic_DNA"/>
</dbReference>
<dbReference type="EMBL" id="AY261361">
    <property type="status" value="NOT_ANNOTATED_CDS"/>
    <property type="molecule type" value="Genomic_DNA"/>
</dbReference>
<dbReference type="SMR" id="Q8V9U4"/>
<dbReference type="Proteomes" id="UP000000860">
    <property type="component" value="Segment"/>
</dbReference>
<dbReference type="GO" id="GO:0005524">
    <property type="term" value="F:ATP binding"/>
    <property type="evidence" value="ECO:0007669"/>
    <property type="project" value="UniProtKB-KW"/>
</dbReference>
<dbReference type="GO" id="GO:0004386">
    <property type="term" value="F:helicase activity"/>
    <property type="evidence" value="ECO:0007669"/>
    <property type="project" value="UniProtKB-KW"/>
</dbReference>
<dbReference type="GO" id="GO:0016817">
    <property type="term" value="F:hydrolase activity, acting on acid anhydrides"/>
    <property type="evidence" value="ECO:0007669"/>
    <property type="project" value="InterPro"/>
</dbReference>
<dbReference type="GO" id="GO:0006260">
    <property type="term" value="P:DNA replication"/>
    <property type="evidence" value="ECO:0007669"/>
    <property type="project" value="UniProtKB-KW"/>
</dbReference>
<dbReference type="Gene3D" id="3.40.50.300">
    <property type="entry name" value="P-loop containing nucleotide triphosphate hydrolases"/>
    <property type="match status" value="1"/>
</dbReference>
<dbReference type="InterPro" id="IPR056443">
    <property type="entry name" value="AEP_C962R"/>
</dbReference>
<dbReference type="InterPro" id="IPR014015">
    <property type="entry name" value="Helicase_SF3_DNA-vir"/>
</dbReference>
<dbReference type="InterPro" id="IPR027417">
    <property type="entry name" value="P-loop_NTPase"/>
</dbReference>
<dbReference type="InterPro" id="IPR014818">
    <property type="entry name" value="Phage/plasmid_primase_P4_C"/>
</dbReference>
<dbReference type="InterPro" id="IPR014819">
    <property type="entry name" value="PriCT_2"/>
</dbReference>
<dbReference type="InterPro" id="IPR051620">
    <property type="entry name" value="Viral_Helicase-Primase_Cplx"/>
</dbReference>
<dbReference type="PANTHER" id="PTHR35372">
    <property type="entry name" value="ATP BINDING PROTEIN-RELATED"/>
    <property type="match status" value="1"/>
</dbReference>
<dbReference type="PANTHER" id="PTHR35372:SF2">
    <property type="entry name" value="SF3 HELICASE DOMAIN-CONTAINING PROTEIN"/>
    <property type="match status" value="1"/>
</dbReference>
<dbReference type="Pfam" id="PF23162">
    <property type="entry name" value="AEP_C962R"/>
    <property type="match status" value="1"/>
</dbReference>
<dbReference type="Pfam" id="PF08706">
    <property type="entry name" value="D5_N"/>
    <property type="match status" value="1"/>
</dbReference>
<dbReference type="Pfam" id="PF08707">
    <property type="entry name" value="PriCT_2"/>
    <property type="match status" value="1"/>
</dbReference>
<dbReference type="SUPFAM" id="SSF52540">
    <property type="entry name" value="P-loop containing nucleoside triphosphate hydrolases"/>
    <property type="match status" value="1"/>
</dbReference>
<dbReference type="PROSITE" id="PS51206">
    <property type="entry name" value="SF3_HELICASE_1"/>
    <property type="match status" value="1"/>
</dbReference>
<keyword id="KW-0067">ATP-binding</keyword>
<keyword id="KW-0235">DNA replication</keyword>
<keyword id="KW-0347">Helicase</keyword>
<keyword id="KW-0378">Hydrolase</keyword>
<keyword id="KW-0426">Late protein</keyword>
<keyword id="KW-0547">Nucleotide-binding</keyword>
<name>H962R_ASFM2</name>
<organism>
    <name type="scientific">African swine fever virus (isolate Tick/Malawi/Lil 20-1/1983)</name>
    <name type="common">ASFV</name>
    <dbReference type="NCBI Taxonomy" id="10500"/>
    <lineage>
        <taxon>Viruses</taxon>
        <taxon>Varidnaviria</taxon>
        <taxon>Bamfordvirae</taxon>
        <taxon>Nucleocytoviricota</taxon>
        <taxon>Pokkesviricetes</taxon>
        <taxon>Asfuvirales</taxon>
        <taxon>Asfarviridae</taxon>
        <taxon>Asfivirus</taxon>
        <taxon>African swine fever virus</taxon>
    </lineage>
</organism>
<proteinExistence type="inferred from homology"/>
<accession>Q8V9U4</accession>
<reference key="1">
    <citation type="submission" date="2003-03" db="EMBL/GenBank/DDBJ databases">
        <title>African swine fever virus genomes.</title>
        <authorList>
            <person name="Kutish G.F."/>
            <person name="Rock D.L."/>
        </authorList>
    </citation>
    <scope>NUCLEOTIDE SEQUENCE [LARGE SCALE GENOMIC DNA]</scope>
</reference>
<reference key="2">
    <citation type="submission" date="2001-11" db="EMBL/GenBank/DDBJ databases">
        <title>Nucleotide sequence and analysis of 16.25 kilobase pairs of the African swine fever virus genome that span the central variable region.</title>
        <authorList>
            <person name="Roberts P.C."/>
            <person name="Lu Z."/>
            <person name="Rock D.L."/>
        </authorList>
    </citation>
    <scope>NUCLEOTIDE SEQUENCE [GENOMIC DNA] OF 615-962</scope>
</reference>
<gene>
    <name type="ordered locus">Mal-079</name>
    <name type="ORF">L09AR</name>
</gene>